<feature type="chain" id="PRO_1000047960" description="Protein RecA">
    <location>
        <begin position="1"/>
        <end position="377"/>
    </location>
</feature>
<feature type="region of interest" description="Disordered" evidence="2">
    <location>
        <begin position="1"/>
        <end position="20"/>
    </location>
</feature>
<feature type="region of interest" description="Disordered" evidence="2">
    <location>
        <begin position="346"/>
        <end position="377"/>
    </location>
</feature>
<feature type="compositionally biased region" description="Polar residues" evidence="2">
    <location>
        <begin position="1"/>
        <end position="13"/>
    </location>
</feature>
<feature type="compositionally biased region" description="Polar residues" evidence="2">
    <location>
        <begin position="362"/>
        <end position="377"/>
    </location>
</feature>
<feature type="binding site" evidence="1">
    <location>
        <begin position="82"/>
        <end position="89"/>
    </location>
    <ligand>
        <name>ATP</name>
        <dbReference type="ChEBI" id="CHEBI:30616"/>
    </ligand>
</feature>
<organism>
    <name type="scientific">Prochlorococcus marinus (strain NATL1A)</name>
    <dbReference type="NCBI Taxonomy" id="167555"/>
    <lineage>
        <taxon>Bacteria</taxon>
        <taxon>Bacillati</taxon>
        <taxon>Cyanobacteriota</taxon>
        <taxon>Cyanophyceae</taxon>
        <taxon>Synechococcales</taxon>
        <taxon>Prochlorococcaceae</taxon>
        <taxon>Prochlorococcus</taxon>
    </lineage>
</organism>
<evidence type="ECO:0000255" key="1">
    <source>
        <dbReference type="HAMAP-Rule" id="MF_00268"/>
    </source>
</evidence>
<evidence type="ECO:0000256" key="2">
    <source>
        <dbReference type="SAM" id="MobiDB-lite"/>
    </source>
</evidence>
<protein>
    <recommendedName>
        <fullName evidence="1">Protein RecA</fullName>
    </recommendedName>
    <alternativeName>
        <fullName evidence="1">Recombinase A</fullName>
    </alternativeName>
</protein>
<dbReference type="EMBL" id="CP000553">
    <property type="protein sequence ID" value="ABM76563.1"/>
    <property type="molecule type" value="Genomic_DNA"/>
</dbReference>
<dbReference type="RefSeq" id="WP_011824518.1">
    <property type="nucleotide sequence ID" value="NC_008819.1"/>
</dbReference>
<dbReference type="SMR" id="A2C503"/>
<dbReference type="KEGG" id="pme:NATL1_20071"/>
<dbReference type="eggNOG" id="COG0468">
    <property type="taxonomic scope" value="Bacteria"/>
</dbReference>
<dbReference type="HOGENOM" id="CLU_040469_3_2_3"/>
<dbReference type="Proteomes" id="UP000002592">
    <property type="component" value="Chromosome"/>
</dbReference>
<dbReference type="GO" id="GO:0005829">
    <property type="term" value="C:cytosol"/>
    <property type="evidence" value="ECO:0007669"/>
    <property type="project" value="TreeGrafter"/>
</dbReference>
<dbReference type="GO" id="GO:0005524">
    <property type="term" value="F:ATP binding"/>
    <property type="evidence" value="ECO:0007669"/>
    <property type="project" value="UniProtKB-UniRule"/>
</dbReference>
<dbReference type="GO" id="GO:0016887">
    <property type="term" value="F:ATP hydrolysis activity"/>
    <property type="evidence" value="ECO:0007669"/>
    <property type="project" value="InterPro"/>
</dbReference>
<dbReference type="GO" id="GO:0140664">
    <property type="term" value="F:ATP-dependent DNA damage sensor activity"/>
    <property type="evidence" value="ECO:0007669"/>
    <property type="project" value="InterPro"/>
</dbReference>
<dbReference type="GO" id="GO:0003684">
    <property type="term" value="F:damaged DNA binding"/>
    <property type="evidence" value="ECO:0007669"/>
    <property type="project" value="UniProtKB-UniRule"/>
</dbReference>
<dbReference type="GO" id="GO:0003697">
    <property type="term" value="F:single-stranded DNA binding"/>
    <property type="evidence" value="ECO:0007669"/>
    <property type="project" value="UniProtKB-UniRule"/>
</dbReference>
<dbReference type="GO" id="GO:0006310">
    <property type="term" value="P:DNA recombination"/>
    <property type="evidence" value="ECO:0007669"/>
    <property type="project" value="UniProtKB-UniRule"/>
</dbReference>
<dbReference type="GO" id="GO:0006281">
    <property type="term" value="P:DNA repair"/>
    <property type="evidence" value="ECO:0007669"/>
    <property type="project" value="UniProtKB-UniRule"/>
</dbReference>
<dbReference type="GO" id="GO:0009432">
    <property type="term" value="P:SOS response"/>
    <property type="evidence" value="ECO:0007669"/>
    <property type="project" value="UniProtKB-UniRule"/>
</dbReference>
<dbReference type="CDD" id="cd00983">
    <property type="entry name" value="RecA"/>
    <property type="match status" value="1"/>
</dbReference>
<dbReference type="FunFam" id="3.40.50.300:FF:000087">
    <property type="entry name" value="Recombinase RecA"/>
    <property type="match status" value="1"/>
</dbReference>
<dbReference type="Gene3D" id="3.40.50.300">
    <property type="entry name" value="P-loop containing nucleotide triphosphate hydrolases"/>
    <property type="match status" value="1"/>
</dbReference>
<dbReference type="HAMAP" id="MF_00268">
    <property type="entry name" value="RecA"/>
    <property type="match status" value="1"/>
</dbReference>
<dbReference type="InterPro" id="IPR003593">
    <property type="entry name" value="AAA+_ATPase"/>
</dbReference>
<dbReference type="InterPro" id="IPR013765">
    <property type="entry name" value="DNA_recomb/repair_RecA"/>
</dbReference>
<dbReference type="InterPro" id="IPR020584">
    <property type="entry name" value="DNA_recomb/repair_RecA_CS"/>
</dbReference>
<dbReference type="InterPro" id="IPR027417">
    <property type="entry name" value="P-loop_NTPase"/>
</dbReference>
<dbReference type="InterPro" id="IPR049261">
    <property type="entry name" value="RecA-like_C"/>
</dbReference>
<dbReference type="InterPro" id="IPR049428">
    <property type="entry name" value="RecA-like_N"/>
</dbReference>
<dbReference type="InterPro" id="IPR020588">
    <property type="entry name" value="RecA_ATP-bd"/>
</dbReference>
<dbReference type="InterPro" id="IPR023400">
    <property type="entry name" value="RecA_C_sf"/>
</dbReference>
<dbReference type="InterPro" id="IPR020587">
    <property type="entry name" value="RecA_monomer-monomer_interface"/>
</dbReference>
<dbReference type="NCBIfam" id="TIGR02012">
    <property type="entry name" value="tigrfam_recA"/>
    <property type="match status" value="1"/>
</dbReference>
<dbReference type="PANTHER" id="PTHR45900:SF1">
    <property type="entry name" value="MITOCHONDRIAL DNA REPAIR PROTEIN RECA HOMOLOG-RELATED"/>
    <property type="match status" value="1"/>
</dbReference>
<dbReference type="PANTHER" id="PTHR45900">
    <property type="entry name" value="RECA"/>
    <property type="match status" value="1"/>
</dbReference>
<dbReference type="Pfam" id="PF00154">
    <property type="entry name" value="RecA"/>
    <property type="match status" value="1"/>
</dbReference>
<dbReference type="Pfam" id="PF21096">
    <property type="entry name" value="RecA_C"/>
    <property type="match status" value="1"/>
</dbReference>
<dbReference type="PRINTS" id="PR00142">
    <property type="entry name" value="RECA"/>
</dbReference>
<dbReference type="SMART" id="SM00382">
    <property type="entry name" value="AAA"/>
    <property type="match status" value="1"/>
</dbReference>
<dbReference type="SUPFAM" id="SSF52540">
    <property type="entry name" value="P-loop containing nucleoside triphosphate hydrolases"/>
    <property type="match status" value="1"/>
</dbReference>
<dbReference type="SUPFAM" id="SSF54752">
    <property type="entry name" value="RecA protein, C-terminal domain"/>
    <property type="match status" value="1"/>
</dbReference>
<dbReference type="PROSITE" id="PS00321">
    <property type="entry name" value="RECA_1"/>
    <property type="match status" value="1"/>
</dbReference>
<dbReference type="PROSITE" id="PS50162">
    <property type="entry name" value="RECA_2"/>
    <property type="match status" value="1"/>
</dbReference>
<dbReference type="PROSITE" id="PS50163">
    <property type="entry name" value="RECA_3"/>
    <property type="match status" value="1"/>
</dbReference>
<proteinExistence type="inferred from homology"/>
<keyword id="KW-0067">ATP-binding</keyword>
<keyword id="KW-0963">Cytoplasm</keyword>
<keyword id="KW-0227">DNA damage</keyword>
<keyword id="KW-0233">DNA recombination</keyword>
<keyword id="KW-0234">DNA repair</keyword>
<keyword id="KW-0238">DNA-binding</keyword>
<keyword id="KW-0547">Nucleotide-binding</keyword>
<keyword id="KW-0742">SOS response</keyword>
<sequence>MSNEGKPLQSTESTKIDAKSGEKEKALSLVVGQIERNFGKGSIMRLGDASKMRVETISTGALTLDLALGGGYPKGRVIEVYGPESSGKTTLTLHAIAEIQRNGGVAAFVDAEHALDPVYAASLGVDVENLLVSQPDTGEMALEIVDQLIRSAAVDLVVVDSVAALTPRSEIEGEMGDHSVGAQARLMSQAMRKITGNIGKSGCTVIFLNQLRLKIGITYGNPETTTGGNALKFYASVRLDIRRIQTLKRGTEEYGIRAKVKVAKNKVAPPFRIAEFDILFGKGISTLGCLLDLADETNVVTRKGAWYSYEGDNIGQGRDNTITWLEQNPESKEIIEKLVKEKLTEGSEVSANSMRPLASAARQASSRPKLSQVSANG</sequence>
<reference key="1">
    <citation type="journal article" date="2007" name="PLoS Genet.">
        <title>Patterns and implications of gene gain and loss in the evolution of Prochlorococcus.</title>
        <authorList>
            <person name="Kettler G.C."/>
            <person name="Martiny A.C."/>
            <person name="Huang K."/>
            <person name="Zucker J."/>
            <person name="Coleman M.L."/>
            <person name="Rodrigue S."/>
            <person name="Chen F."/>
            <person name="Lapidus A."/>
            <person name="Ferriera S."/>
            <person name="Johnson J."/>
            <person name="Steglich C."/>
            <person name="Church G.M."/>
            <person name="Richardson P."/>
            <person name="Chisholm S.W."/>
        </authorList>
    </citation>
    <scope>NUCLEOTIDE SEQUENCE [LARGE SCALE GENOMIC DNA]</scope>
    <source>
        <strain>NATL1A</strain>
    </source>
</reference>
<comment type="function">
    <text evidence="1">Can catalyze the hydrolysis of ATP in the presence of single-stranded DNA, the ATP-dependent uptake of single-stranded DNA by duplex DNA, and the ATP-dependent hybridization of homologous single-stranded DNAs. It interacts with LexA causing its activation and leading to its autocatalytic cleavage.</text>
</comment>
<comment type="subcellular location">
    <subcellularLocation>
        <location evidence="1">Cytoplasm</location>
    </subcellularLocation>
</comment>
<comment type="similarity">
    <text evidence="1">Belongs to the RecA family.</text>
</comment>
<accession>A2C503</accession>
<name>RECA_PROM1</name>
<gene>
    <name evidence="1" type="primary">recA</name>
    <name type="ordered locus">NATL1_20071</name>
</gene>